<organism>
    <name type="scientific">Desulfitobacterium hafniense (strain DSM 10664 / DCB-2)</name>
    <dbReference type="NCBI Taxonomy" id="272564"/>
    <lineage>
        <taxon>Bacteria</taxon>
        <taxon>Bacillati</taxon>
        <taxon>Bacillota</taxon>
        <taxon>Clostridia</taxon>
        <taxon>Eubacteriales</taxon>
        <taxon>Desulfitobacteriaceae</taxon>
        <taxon>Desulfitobacterium</taxon>
    </lineage>
</organism>
<feature type="chain" id="PRO_0000386845" description="Ribosomal RNA small subunit methyltransferase H">
    <location>
        <begin position="1"/>
        <end position="310"/>
    </location>
</feature>
<feature type="binding site" evidence="1">
    <location>
        <begin position="33"/>
        <end position="35"/>
    </location>
    <ligand>
        <name>S-adenosyl-L-methionine</name>
        <dbReference type="ChEBI" id="CHEBI:59789"/>
    </ligand>
</feature>
<feature type="binding site" evidence="1">
    <location>
        <position position="53"/>
    </location>
    <ligand>
        <name>S-adenosyl-L-methionine</name>
        <dbReference type="ChEBI" id="CHEBI:59789"/>
    </ligand>
</feature>
<feature type="binding site" evidence="1">
    <location>
        <position position="79"/>
    </location>
    <ligand>
        <name>S-adenosyl-L-methionine</name>
        <dbReference type="ChEBI" id="CHEBI:59789"/>
    </ligand>
</feature>
<feature type="binding site" evidence="1">
    <location>
        <position position="100"/>
    </location>
    <ligand>
        <name>S-adenosyl-L-methionine</name>
        <dbReference type="ChEBI" id="CHEBI:59789"/>
    </ligand>
</feature>
<feature type="binding site" evidence="1">
    <location>
        <position position="107"/>
    </location>
    <ligand>
        <name>S-adenosyl-L-methionine</name>
        <dbReference type="ChEBI" id="CHEBI:59789"/>
    </ligand>
</feature>
<gene>
    <name evidence="1" type="primary">rsmH</name>
    <name type="synonym">mraW</name>
    <name type="ordered locus">Dhaf_4071</name>
</gene>
<dbReference type="EC" id="2.1.1.199" evidence="1"/>
<dbReference type="EMBL" id="CP001336">
    <property type="protein sequence ID" value="ACL22080.1"/>
    <property type="molecule type" value="Genomic_DNA"/>
</dbReference>
<dbReference type="RefSeq" id="WP_011460703.1">
    <property type="nucleotide sequence ID" value="NC_011830.1"/>
</dbReference>
<dbReference type="SMR" id="B8FT64"/>
<dbReference type="KEGG" id="dhd:Dhaf_4071"/>
<dbReference type="HOGENOM" id="CLU_038422_2_0_9"/>
<dbReference type="Proteomes" id="UP000007726">
    <property type="component" value="Chromosome"/>
</dbReference>
<dbReference type="GO" id="GO:0005737">
    <property type="term" value="C:cytoplasm"/>
    <property type="evidence" value="ECO:0007669"/>
    <property type="project" value="UniProtKB-SubCell"/>
</dbReference>
<dbReference type="GO" id="GO:0071424">
    <property type="term" value="F:rRNA (cytosine-N4-)-methyltransferase activity"/>
    <property type="evidence" value="ECO:0007669"/>
    <property type="project" value="UniProtKB-UniRule"/>
</dbReference>
<dbReference type="GO" id="GO:0070475">
    <property type="term" value="P:rRNA base methylation"/>
    <property type="evidence" value="ECO:0007669"/>
    <property type="project" value="UniProtKB-UniRule"/>
</dbReference>
<dbReference type="FunFam" id="1.10.150.170:FF:000001">
    <property type="entry name" value="Ribosomal RNA small subunit methyltransferase H"/>
    <property type="match status" value="1"/>
</dbReference>
<dbReference type="Gene3D" id="1.10.150.170">
    <property type="entry name" value="Putative methyltransferase TM0872, insert domain"/>
    <property type="match status" value="1"/>
</dbReference>
<dbReference type="Gene3D" id="3.40.50.150">
    <property type="entry name" value="Vaccinia Virus protein VP39"/>
    <property type="match status" value="1"/>
</dbReference>
<dbReference type="HAMAP" id="MF_01007">
    <property type="entry name" value="16SrRNA_methyltr_H"/>
    <property type="match status" value="1"/>
</dbReference>
<dbReference type="InterPro" id="IPR002903">
    <property type="entry name" value="RsmH"/>
</dbReference>
<dbReference type="InterPro" id="IPR023397">
    <property type="entry name" value="SAM-dep_MeTrfase_MraW_recog"/>
</dbReference>
<dbReference type="InterPro" id="IPR029063">
    <property type="entry name" value="SAM-dependent_MTases_sf"/>
</dbReference>
<dbReference type="NCBIfam" id="TIGR00006">
    <property type="entry name" value="16S rRNA (cytosine(1402)-N(4))-methyltransferase RsmH"/>
    <property type="match status" value="1"/>
</dbReference>
<dbReference type="PANTHER" id="PTHR11265:SF0">
    <property type="entry name" value="12S RRNA N4-METHYLCYTIDINE METHYLTRANSFERASE"/>
    <property type="match status" value="1"/>
</dbReference>
<dbReference type="PANTHER" id="PTHR11265">
    <property type="entry name" value="S-ADENOSYL-METHYLTRANSFERASE MRAW"/>
    <property type="match status" value="1"/>
</dbReference>
<dbReference type="Pfam" id="PF01795">
    <property type="entry name" value="Methyltransf_5"/>
    <property type="match status" value="1"/>
</dbReference>
<dbReference type="PIRSF" id="PIRSF004486">
    <property type="entry name" value="MraW"/>
    <property type="match status" value="1"/>
</dbReference>
<dbReference type="SUPFAM" id="SSF81799">
    <property type="entry name" value="Putative methyltransferase TM0872, insert domain"/>
    <property type="match status" value="1"/>
</dbReference>
<dbReference type="SUPFAM" id="SSF53335">
    <property type="entry name" value="S-adenosyl-L-methionine-dependent methyltransferases"/>
    <property type="match status" value="1"/>
</dbReference>
<accession>B8FT64</accession>
<proteinExistence type="inferred from homology"/>
<name>RSMH_DESHD</name>
<keyword id="KW-0963">Cytoplasm</keyword>
<keyword id="KW-0489">Methyltransferase</keyword>
<keyword id="KW-0698">rRNA processing</keyword>
<keyword id="KW-0949">S-adenosyl-L-methionine</keyword>
<keyword id="KW-0808">Transferase</keyword>
<reference key="1">
    <citation type="journal article" date="2012" name="BMC Microbiol.">
        <title>Genome sequence of Desulfitobacterium hafniense DCB-2, a Gram-positive anaerobe capable of dehalogenation and metal reduction.</title>
        <authorList>
            <person name="Kim S.H."/>
            <person name="Harzman C."/>
            <person name="Davis J.K."/>
            <person name="Hutcheson R."/>
            <person name="Broderick J.B."/>
            <person name="Marsh T.L."/>
            <person name="Tiedje J.M."/>
        </authorList>
    </citation>
    <scope>NUCLEOTIDE SEQUENCE [LARGE SCALE GENOMIC DNA]</scope>
    <source>
        <strain>DSM 10664 / DCB-2</strain>
    </source>
</reference>
<evidence type="ECO:0000255" key="1">
    <source>
        <dbReference type="HAMAP-Rule" id="MF_01007"/>
    </source>
</evidence>
<comment type="function">
    <text evidence="1">Specifically methylates the N4 position of cytidine in position 1402 (C1402) of 16S rRNA.</text>
</comment>
<comment type="catalytic activity">
    <reaction evidence="1">
        <text>cytidine(1402) in 16S rRNA + S-adenosyl-L-methionine = N(4)-methylcytidine(1402) in 16S rRNA + S-adenosyl-L-homocysteine + H(+)</text>
        <dbReference type="Rhea" id="RHEA:42928"/>
        <dbReference type="Rhea" id="RHEA-COMP:10286"/>
        <dbReference type="Rhea" id="RHEA-COMP:10287"/>
        <dbReference type="ChEBI" id="CHEBI:15378"/>
        <dbReference type="ChEBI" id="CHEBI:57856"/>
        <dbReference type="ChEBI" id="CHEBI:59789"/>
        <dbReference type="ChEBI" id="CHEBI:74506"/>
        <dbReference type="ChEBI" id="CHEBI:82748"/>
        <dbReference type="EC" id="2.1.1.199"/>
    </reaction>
</comment>
<comment type="subcellular location">
    <subcellularLocation>
        <location evidence="1">Cytoplasm</location>
    </subcellularLocation>
</comment>
<comment type="similarity">
    <text evidence="1">Belongs to the methyltransferase superfamily. RsmH family.</text>
</comment>
<protein>
    <recommendedName>
        <fullName evidence="1">Ribosomal RNA small subunit methyltransferase H</fullName>
        <ecNumber evidence="1">2.1.1.199</ecNumber>
    </recommendedName>
    <alternativeName>
        <fullName evidence="1">16S rRNA m(4)C1402 methyltransferase</fullName>
    </alternativeName>
    <alternativeName>
        <fullName evidence="1">rRNA (cytosine-N(4)-)-methyltransferase RsmH</fullName>
    </alternativeName>
</protein>
<sequence length="310" mass="34438">MEFHHVTVLLKETVDGVVRDPSGTYVDCTLGGAGHSGYVLSRLSEKGKLVGFDQDPLAIKNAQDKFAGDPRVFLVNRNFEGLEESLQSLELLPVQGVLFDLGVSSPQLDEAERGFSYMQDAELDMRMNPQNPLSAKTLVNEGKAEMLAEILWKYGEEKWSKRIVEFIVEARKQKSITTTGELVDIIKRAIPAGARREGPHPAKRTFQALRIAVNDELGVLERALDQVIRCLAPGGRVGVITFHSLEDRIVKETFNSWLGRCTCPPVFPVCQCGARAMARLVHRKPILPSPQEIEANPRARSAKLRIAEKL</sequence>